<gene>
    <name evidence="1" type="primary">TXNDC12</name>
</gene>
<keyword id="KW-1015">Disulfide bond</keyword>
<keyword id="KW-0256">Endoplasmic reticulum</keyword>
<keyword id="KW-0560">Oxidoreductase</keyword>
<keyword id="KW-0676">Redox-active center</keyword>
<keyword id="KW-1185">Reference proteome</keyword>
<keyword id="KW-0732">Signal</keyword>
<sequence>MELRPRLGATCLLGFSFLLLVTSSHGPNGLGKGFGDHIHWRTLEDGKKEAAASGLPLMVIIHKSWCGACKALKPKFAESTEISELSHNFVMVNLEDEEEPKDEDFSPDGGYIPRILFLDPSGKVRPEIINENGNPSYKYFYISAEQVVQGMKEAQERLTGDAFREKHLEDEL</sequence>
<dbReference type="EC" id="1.8.4.2" evidence="1"/>
<dbReference type="EMBL" id="BT021084">
    <property type="protein sequence ID" value="AAX09101.1"/>
    <property type="molecule type" value="mRNA"/>
</dbReference>
<dbReference type="EMBL" id="BC102314">
    <property type="protein sequence ID" value="AAI02315.1"/>
    <property type="molecule type" value="mRNA"/>
</dbReference>
<dbReference type="RefSeq" id="NP_001015536.1">
    <property type="nucleotide sequence ID" value="NM_001015536.1"/>
</dbReference>
<dbReference type="RefSeq" id="XP_015320857.1">
    <property type="nucleotide sequence ID" value="XM_015465371.1"/>
</dbReference>
<dbReference type="SMR" id="Q5E936"/>
<dbReference type="FunCoup" id="Q5E936">
    <property type="interactions" value="2003"/>
</dbReference>
<dbReference type="STRING" id="9913.ENSBTAP00000014645"/>
<dbReference type="PaxDb" id="9913-ENSBTAP00000014645"/>
<dbReference type="PeptideAtlas" id="Q5E936"/>
<dbReference type="Ensembl" id="ENSBTAT00000014645.6">
    <property type="protein sequence ID" value="ENSBTAP00000014645.4"/>
    <property type="gene ID" value="ENSBTAG00000011024.6"/>
</dbReference>
<dbReference type="GeneID" id="506991"/>
<dbReference type="KEGG" id="bta:506991"/>
<dbReference type="CTD" id="51060"/>
<dbReference type="VEuPathDB" id="HostDB:ENSBTAG00000011024"/>
<dbReference type="VGNC" id="VGNC:36535">
    <property type="gene designation" value="TXNDC12"/>
</dbReference>
<dbReference type="eggNOG" id="ENOG502RXP1">
    <property type="taxonomic scope" value="Eukaryota"/>
</dbReference>
<dbReference type="GeneTree" id="ENSGT00530000063273"/>
<dbReference type="HOGENOM" id="CLU_088048_2_0_1"/>
<dbReference type="InParanoid" id="Q5E936"/>
<dbReference type="OMA" id="SEHFVMV"/>
<dbReference type="OrthoDB" id="262308at2759"/>
<dbReference type="TreeFam" id="TF321449"/>
<dbReference type="Proteomes" id="UP000009136">
    <property type="component" value="Chromosome 3"/>
</dbReference>
<dbReference type="Bgee" id="ENSBTAG00000011024">
    <property type="expression patterns" value="Expressed in spermatocyte and 104 other cell types or tissues"/>
</dbReference>
<dbReference type="GO" id="GO:0005783">
    <property type="term" value="C:endoplasmic reticulum"/>
    <property type="evidence" value="ECO:0000318"/>
    <property type="project" value="GO_Central"/>
</dbReference>
<dbReference type="GO" id="GO:0005788">
    <property type="term" value="C:endoplasmic reticulum lumen"/>
    <property type="evidence" value="ECO:0000250"/>
    <property type="project" value="UniProtKB"/>
</dbReference>
<dbReference type="GO" id="GO:0019153">
    <property type="term" value="F:protein-disulfide reductase (glutathione) activity"/>
    <property type="evidence" value="ECO:0000250"/>
    <property type="project" value="UniProtKB"/>
</dbReference>
<dbReference type="GO" id="GO:1902236">
    <property type="term" value="P:negative regulation of endoplasmic reticulum stress-induced intrinsic apoptotic signaling pathway"/>
    <property type="evidence" value="ECO:0007669"/>
    <property type="project" value="Ensembl"/>
</dbReference>
<dbReference type="CDD" id="cd02959">
    <property type="entry name" value="ERp19"/>
    <property type="match status" value="1"/>
</dbReference>
<dbReference type="FunFam" id="3.40.30.10:FF:000099">
    <property type="entry name" value="thioredoxin domain-containing protein 12"/>
    <property type="match status" value="1"/>
</dbReference>
<dbReference type="Gene3D" id="3.40.30.10">
    <property type="entry name" value="Glutaredoxin"/>
    <property type="match status" value="1"/>
</dbReference>
<dbReference type="InterPro" id="IPR051099">
    <property type="entry name" value="AGR/TXD"/>
</dbReference>
<dbReference type="InterPro" id="IPR037462">
    <property type="entry name" value="ERp19"/>
</dbReference>
<dbReference type="InterPro" id="IPR036249">
    <property type="entry name" value="Thioredoxin-like_sf"/>
</dbReference>
<dbReference type="InterPro" id="IPR017937">
    <property type="entry name" value="Thioredoxin_CS"/>
</dbReference>
<dbReference type="InterPro" id="IPR013766">
    <property type="entry name" value="Thioredoxin_domain"/>
</dbReference>
<dbReference type="PANTHER" id="PTHR15337">
    <property type="entry name" value="ANTERIOR GRADIENT PROTEIN-RELATED"/>
    <property type="match status" value="1"/>
</dbReference>
<dbReference type="PANTHER" id="PTHR15337:SF10">
    <property type="entry name" value="THIOREDOXIN DOMAIN-CONTAINING PROTEIN 12"/>
    <property type="match status" value="1"/>
</dbReference>
<dbReference type="Pfam" id="PF13899">
    <property type="entry name" value="Thioredoxin_7"/>
    <property type="match status" value="1"/>
</dbReference>
<dbReference type="SUPFAM" id="SSF52833">
    <property type="entry name" value="Thioredoxin-like"/>
    <property type="match status" value="1"/>
</dbReference>
<dbReference type="PROSITE" id="PS00194">
    <property type="entry name" value="THIOREDOXIN_1"/>
    <property type="match status" value="1"/>
</dbReference>
<dbReference type="PROSITE" id="PS51352">
    <property type="entry name" value="THIOREDOXIN_2"/>
    <property type="match status" value="1"/>
</dbReference>
<accession>Q5E936</accession>
<proteinExistence type="evidence at transcript level"/>
<evidence type="ECO:0000250" key="1">
    <source>
        <dbReference type="UniProtKB" id="O95881"/>
    </source>
</evidence>
<evidence type="ECO:0000255" key="2">
    <source>
        <dbReference type="PROSITE-ProRule" id="PRU00691"/>
    </source>
</evidence>
<evidence type="ECO:0000255" key="3">
    <source>
        <dbReference type="PROSITE-ProRule" id="PRU10138"/>
    </source>
</evidence>
<name>TXD12_BOVIN</name>
<comment type="function">
    <text evidence="1">Protein-disulfide reductase of the endoplasmic reticulum that promotes disulfide bond formation in client proteins through its thiol-disulfide oxidase activity.</text>
</comment>
<comment type="catalytic activity">
    <reaction evidence="1">
        <text>[protein]-disulfide + 2 glutathione = [protein]-dithiol + glutathione disulfide</text>
        <dbReference type="Rhea" id="RHEA:21064"/>
        <dbReference type="Rhea" id="RHEA-COMP:10593"/>
        <dbReference type="Rhea" id="RHEA-COMP:10594"/>
        <dbReference type="ChEBI" id="CHEBI:29950"/>
        <dbReference type="ChEBI" id="CHEBI:50058"/>
        <dbReference type="ChEBI" id="CHEBI:57925"/>
        <dbReference type="ChEBI" id="CHEBI:58297"/>
        <dbReference type="EC" id="1.8.4.2"/>
    </reaction>
    <physiologicalReaction direction="right-to-left" evidence="1">
        <dbReference type="Rhea" id="RHEA:21066"/>
    </physiologicalReaction>
</comment>
<comment type="subcellular location">
    <subcellularLocation>
        <location evidence="1 3">Endoplasmic reticulum lumen</location>
    </subcellularLocation>
</comment>
<feature type="signal peptide" evidence="1">
    <location>
        <begin position="1"/>
        <end position="26"/>
    </location>
</feature>
<feature type="chain" id="PRO_0000233974" description="Thioredoxin domain-containing protein 12">
    <location>
        <begin position="27"/>
        <end position="172"/>
    </location>
</feature>
<feature type="short sequence motif" description="Prevents secretion from ER" evidence="3">
    <location>
        <begin position="169"/>
        <end position="172"/>
    </location>
</feature>
<feature type="disulfide bond" description="Redox-active" evidence="2">
    <location>
        <begin position="66"/>
        <end position="69"/>
    </location>
</feature>
<reference key="1">
    <citation type="journal article" date="2005" name="BMC Genomics">
        <title>Characterization of 954 bovine full-CDS cDNA sequences.</title>
        <authorList>
            <person name="Harhay G.P."/>
            <person name="Sonstegard T.S."/>
            <person name="Keele J.W."/>
            <person name="Heaton M.P."/>
            <person name="Clawson M.L."/>
            <person name="Snelling W.M."/>
            <person name="Wiedmann R.T."/>
            <person name="Van Tassell C.P."/>
            <person name="Smith T.P.L."/>
        </authorList>
    </citation>
    <scope>NUCLEOTIDE SEQUENCE [LARGE SCALE MRNA]</scope>
</reference>
<reference key="2">
    <citation type="submission" date="2005-08" db="EMBL/GenBank/DDBJ databases">
        <authorList>
            <consortium name="NIH - Mammalian Gene Collection (MGC) project"/>
        </authorList>
    </citation>
    <scope>NUCLEOTIDE SEQUENCE [LARGE SCALE MRNA]</scope>
    <source>
        <strain>Crossbred X Angus</strain>
        <tissue>Ileum</tissue>
    </source>
</reference>
<organism>
    <name type="scientific">Bos taurus</name>
    <name type="common">Bovine</name>
    <dbReference type="NCBI Taxonomy" id="9913"/>
    <lineage>
        <taxon>Eukaryota</taxon>
        <taxon>Metazoa</taxon>
        <taxon>Chordata</taxon>
        <taxon>Craniata</taxon>
        <taxon>Vertebrata</taxon>
        <taxon>Euteleostomi</taxon>
        <taxon>Mammalia</taxon>
        <taxon>Eutheria</taxon>
        <taxon>Laurasiatheria</taxon>
        <taxon>Artiodactyla</taxon>
        <taxon>Ruminantia</taxon>
        <taxon>Pecora</taxon>
        <taxon>Bovidae</taxon>
        <taxon>Bovinae</taxon>
        <taxon>Bos</taxon>
    </lineage>
</organism>
<protein>
    <recommendedName>
        <fullName evidence="1">Thioredoxin domain-containing protein 12</fullName>
        <ecNumber evidence="1">1.8.4.2</ecNumber>
    </recommendedName>
</protein>